<comment type="function">
    <text evidence="1">Modulates RecA activity.</text>
</comment>
<comment type="subcellular location">
    <subcellularLocation>
        <location evidence="2">Cytoplasm</location>
    </subcellularLocation>
</comment>
<comment type="similarity">
    <text evidence="2">Belongs to the RecX family.</text>
</comment>
<keyword id="KW-0963">Cytoplasm</keyword>
<keyword id="KW-1185">Reference proteome</keyword>
<proteinExistence type="inferred from homology"/>
<protein>
    <recommendedName>
        <fullName>Regulatory protein RecX</fullName>
    </recommendedName>
</protein>
<dbReference type="EMBL" id="AE004092">
    <property type="protein sequence ID" value="AAK34384.1"/>
    <property type="molecule type" value="Genomic_DNA"/>
</dbReference>
<dbReference type="EMBL" id="CP000017">
    <property type="protein sequence ID" value="AAZ51938.1"/>
    <property type="molecule type" value="Genomic_DNA"/>
</dbReference>
<dbReference type="RefSeq" id="NP_269663.1">
    <property type="nucleotide sequence ID" value="NC_002737.2"/>
</dbReference>
<dbReference type="SMR" id="Q99YP2"/>
<dbReference type="PaxDb" id="1314-HKU360_01359"/>
<dbReference type="KEGG" id="spy:SPy_1607"/>
<dbReference type="KEGG" id="spz:M5005_Spy1320"/>
<dbReference type="PATRIC" id="fig|160490.10.peg.1401"/>
<dbReference type="HOGENOM" id="CLU_066607_4_0_9"/>
<dbReference type="OMA" id="RGRYNIF"/>
<dbReference type="Proteomes" id="UP000000750">
    <property type="component" value="Chromosome"/>
</dbReference>
<dbReference type="GO" id="GO:0005737">
    <property type="term" value="C:cytoplasm"/>
    <property type="evidence" value="ECO:0007669"/>
    <property type="project" value="UniProtKB-SubCell"/>
</dbReference>
<dbReference type="GO" id="GO:0006282">
    <property type="term" value="P:regulation of DNA repair"/>
    <property type="evidence" value="ECO:0007669"/>
    <property type="project" value="UniProtKB-UniRule"/>
</dbReference>
<dbReference type="Gene3D" id="1.10.10.10">
    <property type="entry name" value="Winged helix-like DNA-binding domain superfamily/Winged helix DNA-binding domain"/>
    <property type="match status" value="4"/>
</dbReference>
<dbReference type="HAMAP" id="MF_01114">
    <property type="entry name" value="RecX"/>
    <property type="match status" value="1"/>
</dbReference>
<dbReference type="InterPro" id="IPR053926">
    <property type="entry name" value="RecX_HTH_1st"/>
</dbReference>
<dbReference type="InterPro" id="IPR053924">
    <property type="entry name" value="RecX_HTH_2nd"/>
</dbReference>
<dbReference type="InterPro" id="IPR053925">
    <property type="entry name" value="RecX_HTH_3rd"/>
</dbReference>
<dbReference type="InterPro" id="IPR003783">
    <property type="entry name" value="Regulatory_RecX"/>
</dbReference>
<dbReference type="InterPro" id="IPR036388">
    <property type="entry name" value="WH-like_DNA-bd_sf"/>
</dbReference>
<dbReference type="NCBIfam" id="NF010733">
    <property type="entry name" value="PRK14135.1"/>
    <property type="match status" value="1"/>
</dbReference>
<dbReference type="PANTHER" id="PTHR33602">
    <property type="entry name" value="REGULATORY PROTEIN RECX FAMILY PROTEIN"/>
    <property type="match status" value="1"/>
</dbReference>
<dbReference type="PANTHER" id="PTHR33602:SF1">
    <property type="entry name" value="REGULATORY PROTEIN RECX FAMILY PROTEIN"/>
    <property type="match status" value="1"/>
</dbReference>
<dbReference type="Pfam" id="PF21982">
    <property type="entry name" value="RecX_HTH1"/>
    <property type="match status" value="1"/>
</dbReference>
<dbReference type="Pfam" id="PF02631">
    <property type="entry name" value="RecX_HTH2"/>
    <property type="match status" value="1"/>
</dbReference>
<dbReference type="Pfam" id="PF21981">
    <property type="entry name" value="RecX_HTH3"/>
    <property type="match status" value="2"/>
</dbReference>
<evidence type="ECO:0000250" key="1"/>
<evidence type="ECO:0000305" key="2"/>
<organism>
    <name type="scientific">Streptococcus pyogenes serotype M1</name>
    <dbReference type="NCBI Taxonomy" id="301447"/>
    <lineage>
        <taxon>Bacteria</taxon>
        <taxon>Bacillati</taxon>
        <taxon>Bacillota</taxon>
        <taxon>Bacilli</taxon>
        <taxon>Lactobacillales</taxon>
        <taxon>Streptococcaceae</taxon>
        <taxon>Streptococcus</taxon>
    </lineage>
</organism>
<accession>Q99YP2</accession>
<accession>Q48XI7</accession>
<sequence length="258" mass="30562">MKITKIEKKKRLYLIELDNDESLYVTEDTIVRFMLSKDKVLDNDQLEDMKHFAQLSYGKNLALYFLSFQQRSNKQVADYLRKHEIEEHIIADIITQLQEEQWIDDTKLADTYIRQNQLNGDKGPQVLKQKLLQKGIASHDIDPILSQTDFSQLAQKVSQKLFDKYQEKLPPKALKDKITQALLTKGFSYDLAKHSLNHLNFDQDNQEIEDLLDKELDKQYRKLSRKYDGYTLKQKLYQALYRKGYNSDDINCKLRNYL</sequence>
<reference key="1">
    <citation type="journal article" date="2001" name="Proc. Natl. Acad. Sci. U.S.A.">
        <title>Complete genome sequence of an M1 strain of Streptococcus pyogenes.</title>
        <authorList>
            <person name="Ferretti J.J."/>
            <person name="McShan W.M."/>
            <person name="Ajdic D.J."/>
            <person name="Savic D.J."/>
            <person name="Savic G."/>
            <person name="Lyon K."/>
            <person name="Primeaux C."/>
            <person name="Sezate S."/>
            <person name="Suvorov A.N."/>
            <person name="Kenton S."/>
            <person name="Lai H.S."/>
            <person name="Lin S.P."/>
            <person name="Qian Y."/>
            <person name="Jia H.G."/>
            <person name="Najar F.Z."/>
            <person name="Ren Q."/>
            <person name="Zhu H."/>
            <person name="Song L."/>
            <person name="White J."/>
            <person name="Yuan X."/>
            <person name="Clifton S.W."/>
            <person name="Roe B.A."/>
            <person name="McLaughlin R.E."/>
        </authorList>
    </citation>
    <scope>NUCLEOTIDE SEQUENCE [LARGE SCALE GENOMIC DNA]</scope>
    <source>
        <strain>ATCC 700294 / SF370 / Serotype M1</strain>
    </source>
</reference>
<reference key="2">
    <citation type="journal article" date="2005" name="J. Infect. Dis.">
        <title>Evolutionary origin and emergence of a highly successful clone of serotype M1 group A Streptococcus involved multiple horizontal gene transfer events.</title>
        <authorList>
            <person name="Sumby P."/>
            <person name="Porcella S.F."/>
            <person name="Madrigal A.G."/>
            <person name="Barbian K.D."/>
            <person name="Virtaneva K."/>
            <person name="Ricklefs S.M."/>
            <person name="Sturdevant D.E."/>
            <person name="Graham M.R."/>
            <person name="Vuopio-Varkila J."/>
            <person name="Hoe N.P."/>
            <person name="Musser J.M."/>
        </authorList>
    </citation>
    <scope>NUCLEOTIDE SEQUENCE [LARGE SCALE GENOMIC DNA]</scope>
    <source>
        <strain>ATCC BAA-947 / MGAS5005 / Serotype M1</strain>
    </source>
</reference>
<gene>
    <name type="primary">recX</name>
    <name type="ordered locus">SPy_1607</name>
    <name type="ordered locus">M5005_Spy1320</name>
</gene>
<feature type="chain" id="PRO_0000162483" description="Regulatory protein RecX">
    <location>
        <begin position="1"/>
        <end position="258"/>
    </location>
</feature>
<name>RECX_STRP1</name>